<keyword id="KW-0131">Cell cycle</keyword>
<keyword id="KW-0132">Cell division</keyword>
<keyword id="KW-0158">Chromosome</keyword>
<keyword id="KW-0159">Chromosome partition</keyword>
<keyword id="KW-0963">Cytoplasm</keyword>
<keyword id="KW-0206">Cytoskeleton</keyword>
<keyword id="KW-0469">Meiosis</keyword>
<keyword id="KW-1185">Reference proteome</keyword>
<keyword id="KW-0779">Telomere</keyword>
<evidence type="ECO:0000269" key="1">
    <source>
    </source>
</evidence>
<evidence type="ECO:0000269" key="2">
    <source>
    </source>
</evidence>
<dbReference type="EMBL" id="AB232930">
    <property type="protein sequence ID" value="BAE80118.1"/>
    <property type="molecule type" value="Genomic_DNA"/>
</dbReference>
<dbReference type="EMBL" id="CU329670">
    <property type="protein sequence ID" value="CAK10697.1"/>
    <property type="molecule type" value="Genomic_DNA"/>
</dbReference>
<dbReference type="PIR" id="T39075">
    <property type="entry name" value="T39075"/>
</dbReference>
<dbReference type="RefSeq" id="XP_001713078.1">
    <property type="nucleotide sequence ID" value="XM_001713026.2"/>
</dbReference>
<dbReference type="BioGRID" id="278458">
    <property type="interactions" value="16"/>
</dbReference>
<dbReference type="FunCoup" id="Q92358">
    <property type="interactions" value="3"/>
</dbReference>
<dbReference type="IntAct" id="Q92358">
    <property type="interactions" value="3"/>
</dbReference>
<dbReference type="STRING" id="284812.Q92358"/>
<dbReference type="PaxDb" id="4896-SPAC6G9.13c.1"/>
<dbReference type="EnsemblFungi" id="SPAC6G9.13c.1">
    <property type="protein sequence ID" value="SPAC6G9.13c.1:pep"/>
    <property type="gene ID" value="SPAC6G9.13c"/>
</dbReference>
<dbReference type="PomBase" id="SPAC6G9.13c">
    <property type="gene designation" value="bqt1"/>
</dbReference>
<dbReference type="VEuPathDB" id="FungiDB:SPAC6G9.13c"/>
<dbReference type="HOGENOM" id="CLU_1918310_0_0_1"/>
<dbReference type="InParanoid" id="Q92358"/>
<dbReference type="OMA" id="EFRIHYY"/>
<dbReference type="PRO" id="PR:Q92358"/>
<dbReference type="Proteomes" id="UP000002485">
    <property type="component" value="Chromosome I"/>
</dbReference>
<dbReference type="GO" id="GO:0140445">
    <property type="term" value="C:chromosome, telomeric repeat region"/>
    <property type="evidence" value="ECO:0000314"/>
    <property type="project" value="PomBase"/>
</dbReference>
<dbReference type="GO" id="GO:0005829">
    <property type="term" value="C:cytosol"/>
    <property type="evidence" value="ECO:0007005"/>
    <property type="project" value="PomBase"/>
</dbReference>
<dbReference type="GO" id="GO:0035974">
    <property type="term" value="C:meiotic spindle pole body"/>
    <property type="evidence" value="ECO:0000314"/>
    <property type="project" value="PomBase"/>
</dbReference>
<dbReference type="GO" id="GO:0005634">
    <property type="term" value="C:nucleus"/>
    <property type="evidence" value="ECO:0007005"/>
    <property type="project" value="PomBase"/>
</dbReference>
<dbReference type="GO" id="GO:0110092">
    <property type="term" value="C:nucleus leading edge"/>
    <property type="evidence" value="ECO:0000314"/>
    <property type="project" value="PomBase"/>
</dbReference>
<dbReference type="GO" id="GO:0030674">
    <property type="term" value="F:protein-macromolecule adaptor activity"/>
    <property type="evidence" value="ECO:0000353"/>
    <property type="project" value="PomBase"/>
</dbReference>
<dbReference type="GO" id="GO:0051301">
    <property type="term" value="P:cell division"/>
    <property type="evidence" value="ECO:0007669"/>
    <property type="project" value="UniProtKB-KW"/>
</dbReference>
<dbReference type="GO" id="GO:0032121">
    <property type="term" value="P:meiotic attachment of telomeric heterochromatin to spindle pole body"/>
    <property type="evidence" value="ECO:0000315"/>
    <property type="project" value="PomBase"/>
</dbReference>
<dbReference type="GO" id="GO:0051321">
    <property type="term" value="P:meiotic cell cycle"/>
    <property type="evidence" value="ECO:0000315"/>
    <property type="project" value="PomBase"/>
</dbReference>
<gene>
    <name type="primary">bqt1</name>
    <name type="synonym">mug23</name>
    <name type="synonym">rec26</name>
    <name type="ORF">SPAC6G9.13c</name>
</gene>
<feature type="chain" id="PRO_0000116629" description="Telomere bouquet protein 1">
    <location>
        <begin position="1"/>
        <end position="132"/>
    </location>
</feature>
<reference key="1">
    <citation type="journal article" date="2006" name="Cell">
        <title>Meiotic proteins bqt1 and bqt2 tether telomeres to form the bouquet arrangement of chromosomes.</title>
        <authorList>
            <person name="Chikashige Y."/>
            <person name="Tsutsumi C."/>
            <person name="Yamane M."/>
            <person name="Okamasa K."/>
            <person name="Haraguchi T."/>
            <person name="Hiraoka Y."/>
        </authorList>
    </citation>
    <scope>NUCLEOTIDE SEQUENCE [GENOMIC DNA]</scope>
    <scope>FUNCTION</scope>
    <scope>INTERACTION WITH BQT2 AND SAD1</scope>
    <scope>SUBCELLULAR LOCATION</scope>
</reference>
<reference key="2">
    <citation type="journal article" date="2002" name="Nature">
        <title>The genome sequence of Schizosaccharomyces pombe.</title>
        <authorList>
            <person name="Wood V."/>
            <person name="Gwilliam R."/>
            <person name="Rajandream M.A."/>
            <person name="Lyne M.H."/>
            <person name="Lyne R."/>
            <person name="Stewart A."/>
            <person name="Sgouros J.G."/>
            <person name="Peat N."/>
            <person name="Hayles J."/>
            <person name="Baker S.G."/>
            <person name="Basham D."/>
            <person name="Bowman S."/>
            <person name="Brooks K."/>
            <person name="Brown D."/>
            <person name="Brown S."/>
            <person name="Chillingworth T."/>
            <person name="Churcher C.M."/>
            <person name="Collins M."/>
            <person name="Connor R."/>
            <person name="Cronin A."/>
            <person name="Davis P."/>
            <person name="Feltwell T."/>
            <person name="Fraser A."/>
            <person name="Gentles S."/>
            <person name="Goble A."/>
            <person name="Hamlin N."/>
            <person name="Harris D.E."/>
            <person name="Hidalgo J."/>
            <person name="Hodgson G."/>
            <person name="Holroyd S."/>
            <person name="Hornsby T."/>
            <person name="Howarth S."/>
            <person name="Huckle E.J."/>
            <person name="Hunt S."/>
            <person name="Jagels K."/>
            <person name="James K.D."/>
            <person name="Jones L."/>
            <person name="Jones M."/>
            <person name="Leather S."/>
            <person name="McDonald S."/>
            <person name="McLean J."/>
            <person name="Mooney P."/>
            <person name="Moule S."/>
            <person name="Mungall K.L."/>
            <person name="Murphy L.D."/>
            <person name="Niblett D."/>
            <person name="Odell C."/>
            <person name="Oliver K."/>
            <person name="O'Neil S."/>
            <person name="Pearson D."/>
            <person name="Quail M.A."/>
            <person name="Rabbinowitsch E."/>
            <person name="Rutherford K.M."/>
            <person name="Rutter S."/>
            <person name="Saunders D."/>
            <person name="Seeger K."/>
            <person name="Sharp S."/>
            <person name="Skelton J."/>
            <person name="Simmonds M.N."/>
            <person name="Squares R."/>
            <person name="Squares S."/>
            <person name="Stevens K."/>
            <person name="Taylor K."/>
            <person name="Taylor R.G."/>
            <person name="Tivey A."/>
            <person name="Walsh S.V."/>
            <person name="Warren T."/>
            <person name="Whitehead S."/>
            <person name="Woodward J.R."/>
            <person name="Volckaert G."/>
            <person name="Aert R."/>
            <person name="Robben J."/>
            <person name="Grymonprez B."/>
            <person name="Weltjens I."/>
            <person name="Vanstreels E."/>
            <person name="Rieger M."/>
            <person name="Schaefer M."/>
            <person name="Mueller-Auer S."/>
            <person name="Gabel C."/>
            <person name="Fuchs M."/>
            <person name="Duesterhoeft A."/>
            <person name="Fritzc C."/>
            <person name="Holzer E."/>
            <person name="Moestl D."/>
            <person name="Hilbert H."/>
            <person name="Borzym K."/>
            <person name="Langer I."/>
            <person name="Beck A."/>
            <person name="Lehrach H."/>
            <person name="Reinhardt R."/>
            <person name="Pohl T.M."/>
            <person name="Eger P."/>
            <person name="Zimmermann W."/>
            <person name="Wedler H."/>
            <person name="Wambutt R."/>
            <person name="Purnelle B."/>
            <person name="Goffeau A."/>
            <person name="Cadieu E."/>
            <person name="Dreano S."/>
            <person name="Gloux S."/>
            <person name="Lelaure V."/>
            <person name="Mottier S."/>
            <person name="Galibert F."/>
            <person name="Aves S.J."/>
            <person name="Xiang Z."/>
            <person name="Hunt C."/>
            <person name="Moore K."/>
            <person name="Hurst S.M."/>
            <person name="Lucas M."/>
            <person name="Rochet M."/>
            <person name="Gaillardin C."/>
            <person name="Tallada V.A."/>
            <person name="Garzon A."/>
            <person name="Thode G."/>
            <person name="Daga R.R."/>
            <person name="Cruzado L."/>
            <person name="Jimenez J."/>
            <person name="Sanchez M."/>
            <person name="del Rey F."/>
            <person name="Benito J."/>
            <person name="Dominguez A."/>
            <person name="Revuelta J.L."/>
            <person name="Moreno S."/>
            <person name="Armstrong J."/>
            <person name="Forsburg S.L."/>
            <person name="Cerutti L."/>
            <person name="Lowe T."/>
            <person name="McCombie W.R."/>
            <person name="Paulsen I."/>
            <person name="Potashkin J."/>
            <person name="Shpakovski G.V."/>
            <person name="Ussery D."/>
            <person name="Barrell B.G."/>
            <person name="Nurse P."/>
        </authorList>
    </citation>
    <scope>NUCLEOTIDE SEQUENCE [LARGE SCALE GENOMIC DNA]</scope>
    <source>
        <strain>972 / ATCC 24843</strain>
    </source>
</reference>
<reference key="3">
    <citation type="journal article" date="2005" name="Curr. Biol.">
        <title>A large-scale screen in S. pombe identifies seven novel genes required for critical meiotic events.</title>
        <authorList>
            <person name="Martin-Castellanos C."/>
            <person name="Blanco M."/>
            <person name="Rozalen A.E."/>
            <person name="Perez-Hidalgo L."/>
            <person name="Garcia A.I."/>
            <person name="Conde F."/>
            <person name="Mata J."/>
            <person name="Ellermeier C."/>
            <person name="Davis L."/>
            <person name="San-Segundo P."/>
            <person name="Smith G.R."/>
            <person name="Moreno S."/>
        </authorList>
    </citation>
    <scope>FUNCTION IN MEIOSIS</scope>
</reference>
<reference key="4">
    <citation type="journal article" date="2006" name="Nat. Biotechnol.">
        <title>ORFeome cloning and global analysis of protein localization in the fission yeast Schizosaccharomyces pombe.</title>
        <authorList>
            <person name="Matsuyama A."/>
            <person name="Arai R."/>
            <person name="Yashiroda Y."/>
            <person name="Shirai A."/>
            <person name="Kamata A."/>
            <person name="Sekido S."/>
            <person name="Kobayashi Y."/>
            <person name="Hashimoto A."/>
            <person name="Hamamoto M."/>
            <person name="Hiraoka Y."/>
            <person name="Horinouchi S."/>
            <person name="Yoshida M."/>
        </authorList>
    </citation>
    <scope>SUBCELLULAR LOCATION [LARGE SCALE ANALYSIS]</scope>
</reference>
<comment type="function">
    <text evidence="1 2">Involved in chromosome segregation. During meiotic prophase, connects telomeres to the spindle pole body by forming a bridge between the telomere protein rap1 and the spindle pole body protein sad1.</text>
</comment>
<comment type="subunit">
    <text evidence="2">Interacts with bqt2 and sad1. The bqt1-bqt2-sad1 complex binds rap1.</text>
</comment>
<comment type="interaction">
    <interactant intactId="EBI-929655">
        <id>Q92358</id>
    </interactant>
    <interactant intactId="EBI-929651">
        <id>Q9US52</id>
        <label>bqt2</label>
    </interactant>
    <organismsDiffer>false</organismsDiffer>
    <experiments>6</experiments>
</comment>
<comment type="interaction">
    <interactant intactId="EBI-929655">
        <id>Q92358</id>
    </interactant>
    <interactant intactId="EBI-929731">
        <id>Q09825</id>
        <label>sad1</label>
    </interactant>
    <organismsDiffer>false</organismsDiffer>
    <experiments>4</experiments>
</comment>
<comment type="subcellular location">
    <subcellularLocation>
        <location>Cytoplasm</location>
        <location>Cytoskeleton</location>
        <location>Microtubule organizing center</location>
        <location>Spindle pole body</location>
    </subcellularLocation>
    <subcellularLocation>
        <location>Chromosome</location>
        <location>Telomere</location>
    </subcellularLocation>
    <text>Colocalizes with the telomere cluster during the 'horsetail' stage and then disappears before the first meiotic division.</text>
</comment>
<organism>
    <name type="scientific">Schizosaccharomyces pombe (strain 972 / ATCC 24843)</name>
    <name type="common">Fission yeast</name>
    <dbReference type="NCBI Taxonomy" id="284812"/>
    <lineage>
        <taxon>Eukaryota</taxon>
        <taxon>Fungi</taxon>
        <taxon>Dikarya</taxon>
        <taxon>Ascomycota</taxon>
        <taxon>Taphrinomycotina</taxon>
        <taxon>Schizosaccharomycetes</taxon>
        <taxon>Schizosaccharomycetales</taxon>
        <taxon>Schizosaccharomycetaceae</taxon>
        <taxon>Schizosaccharomyces</taxon>
    </lineage>
</organism>
<accession>Q92358</accession>
<accession>Q2ABX4</accession>
<protein>
    <recommendedName>
        <fullName>Telomere bouquet protein 1</fullName>
    </recommendedName>
    <alternativeName>
        <fullName>Meiotic chromosome segregation protein bqt1</fullName>
    </alternativeName>
    <alternativeName>
        <fullName>Meiotic recombination protein rec26</fullName>
    </alternativeName>
    <alternativeName>
        <fullName>Meiotically up-regulated gene 23 protein</fullName>
    </alternativeName>
</protein>
<sequence>MHLLTTTLISFEQNKVEYLTQIAIYTQTPVCTDSNCEHARFLKHSLIQVSIERIEYLYSIFPNIWQFALLCQGQNKESLIHMEEDASTNFKLRYYVLPWSRRLQGYQSITVQNGSHVPLVKRLEKWRIFVEC</sequence>
<name>BQT1_SCHPO</name>
<proteinExistence type="evidence at protein level"/>